<accession>P42765</accession>
<accession>Q9BUT6</accession>
<keyword id="KW-0002">3D-structure</keyword>
<keyword id="KW-0007">Acetylation</keyword>
<keyword id="KW-0012">Acyltransferase</keyword>
<keyword id="KW-0903">Direct protein sequencing</keyword>
<keyword id="KW-0276">Fatty acid metabolism</keyword>
<keyword id="KW-0378">Hydrolase</keyword>
<keyword id="KW-0443">Lipid metabolism</keyword>
<keyword id="KW-0496">Mitochondrion</keyword>
<keyword id="KW-0597">Phosphoprotein</keyword>
<keyword id="KW-1267">Proteomics identification</keyword>
<keyword id="KW-1185">Reference proteome</keyword>
<keyword id="KW-0808">Transferase</keyword>
<keyword id="KW-0809">Transit peptide</keyword>
<reference key="1">
    <citation type="journal article" date="1993" name="Biochim. Biophys. Acta">
        <title>Cloning and sequence analysis of a full length cDNA encoding human mitochondrial 3-oxoacyl-CoA thiolase.</title>
        <authorList>
            <person name="Abe H."/>
            <person name="Ohtake A."/>
            <person name="Yamamoto S."/>
            <person name="Satoh Y."/>
            <person name="Takayanagi M."/>
            <person name="Amaya Y."/>
            <person name="Takiguchi M."/>
            <person name="Sakuraba H."/>
            <person name="Suzuki Y."/>
            <person name="Mori M."/>
            <person name="Niimi H."/>
        </authorList>
    </citation>
    <scope>NUCLEOTIDE SEQUENCE [MRNA]</scope>
    <source>
        <tissue>Liver</tissue>
    </source>
</reference>
<reference key="2">
    <citation type="journal article" date="2004" name="Genome Res.">
        <title>The status, quality, and expansion of the NIH full-length cDNA project: the Mammalian Gene Collection (MGC).</title>
        <authorList>
            <consortium name="The MGC Project Team"/>
        </authorList>
    </citation>
    <scope>NUCLEOTIDE SEQUENCE [LARGE SCALE MRNA]</scope>
    <source>
        <tissue>Lung</tissue>
    </source>
</reference>
<reference key="3">
    <citation type="journal article" date="2004" name="Biochem. J.">
        <title>Vectorial proteomics reveal targeting, phosphorylation and specific fragmentation of polymerase I and transcript release factor (PTRF) at the surface of caveolae in human adipocytes.</title>
        <authorList>
            <person name="Aboulaich N."/>
            <person name="Vainonen J.P."/>
            <person name="Stralfors P."/>
            <person name="Vener A.V."/>
        </authorList>
    </citation>
    <scope>PROTEIN SEQUENCE OF 15-25; 46-71 AND 341-360</scope>
    <source>
        <tissue>Adipocyte</tissue>
    </source>
</reference>
<reference key="4">
    <citation type="journal article" date="2008" name="Biochim. Biophys. Acta">
        <title>Acetyl-Coenzyme A acyltransferase 2 attenuates the apoptotic effects of BNIP3 in two human cell lines.</title>
        <authorList>
            <person name="Cao W."/>
            <person name="Liu N."/>
            <person name="Tang S."/>
            <person name="Bao L."/>
            <person name="Shen L."/>
            <person name="Yuan H."/>
            <person name="Zhao X."/>
            <person name="Lu H."/>
        </authorList>
    </citation>
    <scope>FUNCTION</scope>
    <scope>SUBCELLULAR LOCATION</scope>
    <scope>INTERACTION WITH BNIP3</scope>
</reference>
<reference key="5">
    <citation type="journal article" date="2008" name="Proc. Natl. Acad. Sci. U.S.A.">
        <title>A quantitative atlas of mitotic phosphorylation.</title>
        <authorList>
            <person name="Dephoure N."/>
            <person name="Zhou C."/>
            <person name="Villen J."/>
            <person name="Beausoleil S.A."/>
            <person name="Bakalarski C.E."/>
            <person name="Elledge S.J."/>
            <person name="Gygi S.P."/>
        </authorList>
    </citation>
    <scope>PHOSPHORYLATION [LARGE SCALE ANALYSIS] AT THR-119; SER-121 AND TYR-127</scope>
    <scope>IDENTIFICATION BY MASS SPECTROMETRY [LARGE SCALE ANALYSIS]</scope>
    <source>
        <tissue>Cervix carcinoma</tissue>
    </source>
</reference>
<reference key="6">
    <citation type="journal article" date="2011" name="BMC Syst. Biol.">
        <title>Initial characterization of the human central proteome.</title>
        <authorList>
            <person name="Burkard T.R."/>
            <person name="Planyavsky M."/>
            <person name="Kaupe I."/>
            <person name="Breitwieser F.P."/>
            <person name="Buerckstuemmer T."/>
            <person name="Bennett K.L."/>
            <person name="Superti-Furga G."/>
            <person name="Colinge J."/>
        </authorList>
    </citation>
    <scope>IDENTIFICATION BY MASS SPECTROMETRY [LARGE SCALE ANALYSIS]</scope>
</reference>
<reference key="7">
    <citation type="journal article" date="2014" name="J. Proteomics">
        <title>An enzyme assisted RP-RPLC approach for in-depth analysis of human liver phosphoproteome.</title>
        <authorList>
            <person name="Bian Y."/>
            <person name="Song C."/>
            <person name="Cheng K."/>
            <person name="Dong M."/>
            <person name="Wang F."/>
            <person name="Huang J."/>
            <person name="Sun D."/>
            <person name="Wang L."/>
            <person name="Ye M."/>
            <person name="Zou H."/>
        </authorList>
    </citation>
    <scope>PHOSPHORYLATION [LARGE SCALE ANALYSIS] AT SER-140 AND SER-333</scope>
    <scope>IDENTIFICATION BY MASS SPECTROMETRY [LARGE SCALE ANALYSIS]</scope>
    <source>
        <tissue>Liver</tissue>
    </source>
</reference>
<reference key="8">
    <citation type="journal article" date="2015" name="Proteomics">
        <title>N-terminome analysis of the human mitochondrial proteome.</title>
        <authorList>
            <person name="Vaca Jacome A.S."/>
            <person name="Rabilloud T."/>
            <person name="Schaeffer-Reiss C."/>
            <person name="Rompais M."/>
            <person name="Ayoub D."/>
            <person name="Lane L."/>
            <person name="Bairoch A."/>
            <person name="Van Dorsselaer A."/>
            <person name="Carapito C."/>
        </authorList>
    </citation>
    <scope>IDENTIFICATION BY MASS SPECTROMETRY [LARGE SCALE ANALYSIS]</scope>
</reference>
<reference key="9">
    <citation type="journal article" date="2014" name="Acta Crystallogr. D">
        <title>The crystal structure of human mitochondrial 3-ketoacyl-CoA thiolase (T1): insight into the reaction mechanism of its thiolase and thioesterase activities.</title>
        <authorList>
            <person name="Kiema T.R."/>
            <person name="Harijan R.K."/>
            <person name="Strozyk M."/>
            <person name="Fukao T."/>
            <person name="Alexson S.E."/>
            <person name="Wierenga R.K."/>
        </authorList>
    </citation>
    <scope>X-RAY CRYSTALLOGRAPHY (2.00 ANGSTROMS) IN COMPLEX WITH COENZYME A</scope>
    <scope>FUNCTION</scope>
    <scope>CATALYTIC ACTIVITY</scope>
    <scope>BIOPHYSICOCHEMICAL PROPERTIES</scope>
    <scope>PATHWAY</scope>
    <scope>SUBUNIT</scope>
    <scope>ACTIVE SITE</scope>
    <scope>MUTAGENESIS OF CYS-92 AND CYS-382</scope>
</reference>
<name>THIM_HUMAN</name>
<evidence type="ECO:0000250" key="1">
    <source>
        <dbReference type="UniProtKB" id="P13437"/>
    </source>
</evidence>
<evidence type="ECO:0000250" key="2">
    <source>
        <dbReference type="UniProtKB" id="Q8BWT1"/>
    </source>
</evidence>
<evidence type="ECO:0000269" key="3">
    <source>
    </source>
</evidence>
<evidence type="ECO:0000269" key="4">
    <source>
    </source>
</evidence>
<evidence type="ECO:0000305" key="5"/>
<evidence type="ECO:0000305" key="6">
    <source>
    </source>
</evidence>
<evidence type="ECO:0007744" key="7">
    <source>
        <dbReference type="PDB" id="4C2J"/>
    </source>
</evidence>
<evidence type="ECO:0007744" key="8">
    <source>
    </source>
</evidence>
<evidence type="ECO:0007744" key="9">
    <source>
    </source>
</evidence>
<evidence type="ECO:0007829" key="10">
    <source>
        <dbReference type="PDB" id="4C2J"/>
    </source>
</evidence>
<dbReference type="EC" id="2.3.1.16" evidence="4"/>
<dbReference type="EC" id="2.3.1.9" evidence="4"/>
<dbReference type="EC" id="3.1.2.-" evidence="4"/>
<dbReference type="EC" id="3.1.2.1" evidence="4"/>
<dbReference type="EC" id="3.1.2.2" evidence="1"/>
<dbReference type="EMBL" id="D16294">
    <property type="protein sequence ID" value="BAA03800.1"/>
    <property type="molecule type" value="mRNA"/>
</dbReference>
<dbReference type="EMBL" id="BC001918">
    <property type="protein sequence ID" value="AAH01918.1"/>
    <property type="molecule type" value="mRNA"/>
</dbReference>
<dbReference type="CCDS" id="CCDS11939.1"/>
<dbReference type="PIR" id="S43440">
    <property type="entry name" value="S43440"/>
</dbReference>
<dbReference type="RefSeq" id="NP_006102.2">
    <property type="nucleotide sequence ID" value="NM_006111.3"/>
</dbReference>
<dbReference type="PDB" id="4C2J">
    <property type="method" value="X-ray"/>
    <property type="resolution" value="2.00 A"/>
    <property type="chains" value="A/B/C/D=1-397"/>
</dbReference>
<dbReference type="PDB" id="4C2K">
    <property type="method" value="X-ray"/>
    <property type="resolution" value="2.00 A"/>
    <property type="chains" value="A/B/C/D=1-397"/>
</dbReference>
<dbReference type="PDBsum" id="4C2J"/>
<dbReference type="PDBsum" id="4C2K"/>
<dbReference type="SMR" id="P42765"/>
<dbReference type="BioGRID" id="115713">
    <property type="interactions" value="189"/>
</dbReference>
<dbReference type="FunCoup" id="P42765">
    <property type="interactions" value="910"/>
</dbReference>
<dbReference type="IntAct" id="P42765">
    <property type="interactions" value="57"/>
</dbReference>
<dbReference type="MINT" id="P42765"/>
<dbReference type="STRING" id="9606.ENSP00000285093"/>
<dbReference type="DrugBank" id="DB09069">
    <property type="generic name" value="Trimetazidine"/>
</dbReference>
<dbReference type="SwissLipids" id="SLP:000001273"/>
<dbReference type="GlyGen" id="P42765">
    <property type="glycosylation" value="2 sites, 5 N-linked glycans (1 site), 1 O-linked glycan (1 site)"/>
</dbReference>
<dbReference type="iPTMnet" id="P42765"/>
<dbReference type="PhosphoSitePlus" id="P42765"/>
<dbReference type="SwissPalm" id="P42765"/>
<dbReference type="BioMuta" id="ACAA2"/>
<dbReference type="DMDM" id="57015371"/>
<dbReference type="REPRODUCTION-2DPAGE" id="IPI00001539"/>
<dbReference type="CPTAC" id="CPTAC-158"/>
<dbReference type="CPTAC" id="CPTAC-159"/>
<dbReference type="jPOST" id="P42765"/>
<dbReference type="MassIVE" id="P42765"/>
<dbReference type="PaxDb" id="9606-ENSP00000285093"/>
<dbReference type="PeptideAtlas" id="P42765"/>
<dbReference type="ProteomicsDB" id="55548"/>
<dbReference type="Pumba" id="P42765"/>
<dbReference type="TopDownProteomics" id="P42765"/>
<dbReference type="Antibodypedia" id="22617">
    <property type="antibodies" value="391 antibodies from 30 providers"/>
</dbReference>
<dbReference type="DNASU" id="10449"/>
<dbReference type="Ensembl" id="ENST00000285093.15">
    <property type="protein sequence ID" value="ENSP00000285093.8"/>
    <property type="gene ID" value="ENSG00000167315.18"/>
</dbReference>
<dbReference type="GeneID" id="10449"/>
<dbReference type="KEGG" id="hsa:10449"/>
<dbReference type="MANE-Select" id="ENST00000285093.15">
    <property type="protein sequence ID" value="ENSP00000285093.8"/>
    <property type="RefSeq nucleotide sequence ID" value="NM_006111.3"/>
    <property type="RefSeq protein sequence ID" value="NP_006102.2"/>
</dbReference>
<dbReference type="UCSC" id="uc002ldw.5">
    <property type="organism name" value="human"/>
</dbReference>
<dbReference type="AGR" id="HGNC:83"/>
<dbReference type="CTD" id="10449"/>
<dbReference type="DisGeNET" id="10449"/>
<dbReference type="GeneCards" id="ACAA2"/>
<dbReference type="HGNC" id="HGNC:83">
    <property type="gene designation" value="ACAA2"/>
</dbReference>
<dbReference type="HPA" id="ENSG00000167315">
    <property type="expression patterns" value="Tissue enhanced (liver)"/>
</dbReference>
<dbReference type="MalaCards" id="ACAA2"/>
<dbReference type="MIM" id="604770">
    <property type="type" value="gene"/>
</dbReference>
<dbReference type="neXtProt" id="NX_P42765"/>
<dbReference type="OpenTargets" id="ENSG00000167315"/>
<dbReference type="PharmGKB" id="PA24420"/>
<dbReference type="VEuPathDB" id="HostDB:ENSG00000167315"/>
<dbReference type="eggNOG" id="KOG1391">
    <property type="taxonomic scope" value="Eukaryota"/>
</dbReference>
<dbReference type="GeneTree" id="ENSGT01030000234626"/>
<dbReference type="InParanoid" id="P42765"/>
<dbReference type="OMA" id="RWCASSM"/>
<dbReference type="OrthoDB" id="5404651at2759"/>
<dbReference type="PAN-GO" id="P42765">
    <property type="GO annotations" value="3 GO annotations based on evolutionary models"/>
</dbReference>
<dbReference type="PhylomeDB" id="P42765"/>
<dbReference type="TreeFam" id="TF105696"/>
<dbReference type="BioCyc" id="MetaCyc:HS09539-MONOMER"/>
<dbReference type="BRENDA" id="2.3.1.16">
    <property type="organism ID" value="2681"/>
</dbReference>
<dbReference type="PathwayCommons" id="P42765"/>
<dbReference type="Reactome" id="R-HSA-77289">
    <property type="pathway name" value="Mitochondrial Fatty Acid Beta-Oxidation"/>
</dbReference>
<dbReference type="SignaLink" id="P42765"/>
<dbReference type="UniPathway" id="UPA00659"/>
<dbReference type="BioGRID-ORCS" id="10449">
    <property type="hits" value="9 hits in 1156 CRISPR screens"/>
</dbReference>
<dbReference type="ChiTaRS" id="ACAA2">
    <property type="organism name" value="human"/>
</dbReference>
<dbReference type="EvolutionaryTrace" id="P42765"/>
<dbReference type="GeneWiki" id="ACAA2"/>
<dbReference type="GenomeRNAi" id="10449"/>
<dbReference type="Pharos" id="P42765">
    <property type="development level" value="Tbio"/>
</dbReference>
<dbReference type="PRO" id="PR:P42765"/>
<dbReference type="Proteomes" id="UP000005640">
    <property type="component" value="Chromosome 18"/>
</dbReference>
<dbReference type="RNAct" id="P42765">
    <property type="molecule type" value="protein"/>
</dbReference>
<dbReference type="Bgee" id="ENSG00000167315">
    <property type="expression patterns" value="Expressed in right lobe of liver and 179 other cell types or tissues"/>
</dbReference>
<dbReference type="ExpressionAtlas" id="P42765">
    <property type="expression patterns" value="baseline and differential"/>
</dbReference>
<dbReference type="GO" id="GO:0036064">
    <property type="term" value="C:ciliary basal body"/>
    <property type="evidence" value="ECO:0000314"/>
    <property type="project" value="HPA"/>
</dbReference>
<dbReference type="GO" id="GO:0005759">
    <property type="term" value="C:mitochondrial matrix"/>
    <property type="evidence" value="ECO:0000304"/>
    <property type="project" value="Reactome"/>
</dbReference>
<dbReference type="GO" id="GO:0005739">
    <property type="term" value="C:mitochondrion"/>
    <property type="evidence" value="ECO:0000314"/>
    <property type="project" value="UniProtKB"/>
</dbReference>
<dbReference type="GO" id="GO:0016604">
    <property type="term" value="C:nuclear body"/>
    <property type="evidence" value="ECO:0000314"/>
    <property type="project" value="HPA"/>
</dbReference>
<dbReference type="GO" id="GO:0003985">
    <property type="term" value="F:acetyl-CoA C-acetyltransferase activity"/>
    <property type="evidence" value="ECO:0000314"/>
    <property type="project" value="UniProtKB"/>
</dbReference>
<dbReference type="GO" id="GO:0003988">
    <property type="term" value="F:acetyl-CoA C-acyltransferase activity"/>
    <property type="evidence" value="ECO:0000314"/>
    <property type="project" value="UniProtKB"/>
</dbReference>
<dbReference type="GO" id="GO:0003986">
    <property type="term" value="F:acetyl-CoA hydrolase activity"/>
    <property type="evidence" value="ECO:0007669"/>
    <property type="project" value="UniProtKB-EC"/>
</dbReference>
<dbReference type="GO" id="GO:0047617">
    <property type="term" value="F:fatty acyl-CoA hydrolase activity"/>
    <property type="evidence" value="ECO:0000315"/>
    <property type="project" value="UniProtKB"/>
</dbReference>
<dbReference type="GO" id="GO:0003723">
    <property type="term" value="F:RNA binding"/>
    <property type="evidence" value="ECO:0007005"/>
    <property type="project" value="UniProtKB"/>
</dbReference>
<dbReference type="GO" id="GO:0071456">
    <property type="term" value="P:cellular response to hypoxia"/>
    <property type="evidence" value="ECO:0000314"/>
    <property type="project" value="BHF-UCL"/>
</dbReference>
<dbReference type="GO" id="GO:0006695">
    <property type="term" value="P:cholesterol biosynthetic process"/>
    <property type="evidence" value="ECO:0000303"/>
    <property type="project" value="UniProtKB"/>
</dbReference>
<dbReference type="GO" id="GO:0006635">
    <property type="term" value="P:fatty acid beta-oxidation"/>
    <property type="evidence" value="ECO:0000318"/>
    <property type="project" value="GO_Central"/>
</dbReference>
<dbReference type="GO" id="GO:1902109">
    <property type="term" value="P:negative regulation of mitochondrial membrane permeability involved in apoptotic process"/>
    <property type="evidence" value="ECO:0000314"/>
    <property type="project" value="BHF-UCL"/>
</dbReference>
<dbReference type="GO" id="GO:1901029">
    <property type="term" value="P:negative regulation of mitochondrial outer membrane permeabilization involved in apoptotic signaling pathway"/>
    <property type="evidence" value="ECO:0000314"/>
    <property type="project" value="UniProtKB"/>
</dbReference>
<dbReference type="CDD" id="cd00751">
    <property type="entry name" value="thiolase"/>
    <property type="match status" value="1"/>
</dbReference>
<dbReference type="FunFam" id="3.40.47.10:FF:000010">
    <property type="entry name" value="Acetyl-CoA acetyltransferase (Thiolase)"/>
    <property type="match status" value="1"/>
</dbReference>
<dbReference type="Gene3D" id="3.40.47.10">
    <property type="match status" value="2"/>
</dbReference>
<dbReference type="InterPro" id="IPR002155">
    <property type="entry name" value="Thiolase"/>
</dbReference>
<dbReference type="InterPro" id="IPR016039">
    <property type="entry name" value="Thiolase-like"/>
</dbReference>
<dbReference type="InterPro" id="IPR020615">
    <property type="entry name" value="Thiolase_acyl_enz_int_AS"/>
</dbReference>
<dbReference type="InterPro" id="IPR020610">
    <property type="entry name" value="Thiolase_AS"/>
</dbReference>
<dbReference type="InterPro" id="IPR020617">
    <property type="entry name" value="Thiolase_C"/>
</dbReference>
<dbReference type="InterPro" id="IPR020613">
    <property type="entry name" value="Thiolase_CS"/>
</dbReference>
<dbReference type="InterPro" id="IPR020616">
    <property type="entry name" value="Thiolase_N"/>
</dbReference>
<dbReference type="NCBIfam" id="TIGR01930">
    <property type="entry name" value="AcCoA-C-Actrans"/>
    <property type="match status" value="1"/>
</dbReference>
<dbReference type="PANTHER" id="PTHR18919:SF145">
    <property type="entry name" value="3-KETOACYL-COA THIOLASE, MITOCHONDRIAL"/>
    <property type="match status" value="1"/>
</dbReference>
<dbReference type="PANTHER" id="PTHR18919">
    <property type="entry name" value="ACETYL-COA C-ACYLTRANSFERASE"/>
    <property type="match status" value="1"/>
</dbReference>
<dbReference type="Pfam" id="PF02803">
    <property type="entry name" value="Thiolase_C"/>
    <property type="match status" value="1"/>
</dbReference>
<dbReference type="Pfam" id="PF00108">
    <property type="entry name" value="Thiolase_N"/>
    <property type="match status" value="1"/>
</dbReference>
<dbReference type="PIRSF" id="PIRSF000429">
    <property type="entry name" value="Ac-CoA_Ac_transf"/>
    <property type="match status" value="1"/>
</dbReference>
<dbReference type="SUPFAM" id="SSF53901">
    <property type="entry name" value="Thiolase-like"/>
    <property type="match status" value="2"/>
</dbReference>
<dbReference type="PROSITE" id="PS00098">
    <property type="entry name" value="THIOLASE_1"/>
    <property type="match status" value="1"/>
</dbReference>
<dbReference type="PROSITE" id="PS00737">
    <property type="entry name" value="THIOLASE_2"/>
    <property type="match status" value="1"/>
</dbReference>
<dbReference type="PROSITE" id="PS00099">
    <property type="entry name" value="THIOLASE_3"/>
    <property type="match status" value="1"/>
</dbReference>
<proteinExistence type="evidence at protein level"/>
<organism>
    <name type="scientific">Homo sapiens</name>
    <name type="common">Human</name>
    <dbReference type="NCBI Taxonomy" id="9606"/>
    <lineage>
        <taxon>Eukaryota</taxon>
        <taxon>Metazoa</taxon>
        <taxon>Chordata</taxon>
        <taxon>Craniata</taxon>
        <taxon>Vertebrata</taxon>
        <taxon>Euteleostomi</taxon>
        <taxon>Mammalia</taxon>
        <taxon>Eutheria</taxon>
        <taxon>Euarchontoglires</taxon>
        <taxon>Primates</taxon>
        <taxon>Haplorrhini</taxon>
        <taxon>Catarrhini</taxon>
        <taxon>Hominidae</taxon>
        <taxon>Homo</taxon>
    </lineage>
</organism>
<sequence length="397" mass="41924">MALLRGVFVVAAKRTPFGAYGGLLKDFTATDLSEFAAKAALSAGKVSPETVDSVIMGNVLQSSSDAIYLARHVGLRVGIPKETPALTINRLCGSGFQSIVNGCQEICVKEAEVVLCGGTESMSQAPYCVRNVRFGTKLGSDIKLEDSLWVSLTDQHVQLPMAMTAENLAVKHKISREECDKYALQSQQRWKAANDAGYFNDEMAPIEVKTKKGKQTMQVDEHARPQTTLEQLQKLPPVFKKDGTVTAGNASGVADGAGAVIIASEDAVKKHNFTPLARIVGYFVSGCDPSIMGIGPVPAISGALKKAGLSLKDMDLVEVNEAFAPQYLAVERSLDLDISKTNVNGGAIALGHPLGGSGSRITAHLVHELRRRGGKYAVGSACIGGGQGIAVIIQSTA</sequence>
<comment type="function">
    <text evidence="3 4 6">In the production of energy from fats, this is one of the enzymes that catalyzes the last step of the mitochondrial beta-oxidation pathway, an aerobic process breaking down fatty acids into acetyl-CoA (Probable). Using free coenzyme A/CoA, catalyzes the thiolytic cleavage of medium- to long-chain unbranched 3-oxoacyl-CoAs into acetyl-CoA and a fatty acyl-CoA shortened by two carbon atoms (Probable). Also catalyzes the condensation of two acetyl-CoA molecules into acetoacetyl-CoA and could be involved in the production of ketone bodies (Probable). Also displays hydrolase activity on various fatty acyl-CoAs (PubMed:25478839). Thereby, could be responsible for the production of acetate in a side reaction to beta-oxidation (Probable). Abolishes BNIP3-mediated apoptosis and mitochondrial damage (PubMed:18371312).</text>
</comment>
<comment type="catalytic activity">
    <reaction evidence="4">
        <text>an acyl-CoA + acetyl-CoA = a 3-oxoacyl-CoA + CoA</text>
        <dbReference type="Rhea" id="RHEA:21564"/>
        <dbReference type="ChEBI" id="CHEBI:57287"/>
        <dbReference type="ChEBI" id="CHEBI:57288"/>
        <dbReference type="ChEBI" id="CHEBI:58342"/>
        <dbReference type="ChEBI" id="CHEBI:90726"/>
        <dbReference type="EC" id="2.3.1.16"/>
    </reaction>
    <physiologicalReaction direction="left-to-right" evidence="6">
        <dbReference type="Rhea" id="RHEA:21565"/>
    </physiologicalReaction>
    <physiologicalReaction direction="right-to-left" evidence="6">
        <dbReference type="Rhea" id="RHEA:21566"/>
    </physiologicalReaction>
</comment>
<comment type="catalytic activity">
    <reaction evidence="4">
        <text>2 acetyl-CoA = acetoacetyl-CoA + CoA</text>
        <dbReference type="Rhea" id="RHEA:21036"/>
        <dbReference type="ChEBI" id="CHEBI:57286"/>
        <dbReference type="ChEBI" id="CHEBI:57287"/>
        <dbReference type="ChEBI" id="CHEBI:57288"/>
        <dbReference type="EC" id="2.3.1.9"/>
    </reaction>
    <physiologicalReaction direction="left-to-right" evidence="6">
        <dbReference type="Rhea" id="RHEA:21037"/>
    </physiologicalReaction>
    <physiologicalReaction direction="right-to-left" evidence="6">
        <dbReference type="Rhea" id="RHEA:21038"/>
    </physiologicalReaction>
</comment>
<comment type="catalytic activity">
    <reaction evidence="4">
        <text>acetyl-CoA + H2O = acetate + CoA + H(+)</text>
        <dbReference type="Rhea" id="RHEA:20289"/>
        <dbReference type="ChEBI" id="CHEBI:15377"/>
        <dbReference type="ChEBI" id="CHEBI:15378"/>
        <dbReference type="ChEBI" id="CHEBI:30089"/>
        <dbReference type="ChEBI" id="CHEBI:57287"/>
        <dbReference type="ChEBI" id="CHEBI:57288"/>
        <dbReference type="EC" id="3.1.2.1"/>
    </reaction>
    <physiologicalReaction direction="left-to-right" evidence="6">
        <dbReference type="Rhea" id="RHEA:20290"/>
    </physiologicalReaction>
</comment>
<comment type="catalytic activity">
    <reaction evidence="4">
        <text>propanoyl-CoA + H2O = propanoate + CoA + H(+)</text>
        <dbReference type="Rhea" id="RHEA:40103"/>
        <dbReference type="ChEBI" id="CHEBI:15377"/>
        <dbReference type="ChEBI" id="CHEBI:15378"/>
        <dbReference type="ChEBI" id="CHEBI:17272"/>
        <dbReference type="ChEBI" id="CHEBI:57287"/>
        <dbReference type="ChEBI" id="CHEBI:57392"/>
    </reaction>
    <physiologicalReaction direction="left-to-right" evidence="6">
        <dbReference type="Rhea" id="RHEA:40104"/>
    </physiologicalReaction>
</comment>
<comment type="catalytic activity">
    <reaction evidence="4">
        <text>butanoyl-CoA + H2O = butanoate + CoA + H(+)</text>
        <dbReference type="Rhea" id="RHEA:40111"/>
        <dbReference type="ChEBI" id="CHEBI:15377"/>
        <dbReference type="ChEBI" id="CHEBI:15378"/>
        <dbReference type="ChEBI" id="CHEBI:17968"/>
        <dbReference type="ChEBI" id="CHEBI:57287"/>
        <dbReference type="ChEBI" id="CHEBI:57371"/>
    </reaction>
    <physiologicalReaction direction="left-to-right" evidence="6">
        <dbReference type="Rhea" id="RHEA:40112"/>
    </physiologicalReaction>
</comment>
<comment type="catalytic activity">
    <reaction evidence="4">
        <text>hexanoyl-CoA + H2O = hexanoate + CoA + H(+)</text>
        <dbReference type="Rhea" id="RHEA:40115"/>
        <dbReference type="ChEBI" id="CHEBI:15377"/>
        <dbReference type="ChEBI" id="CHEBI:15378"/>
        <dbReference type="ChEBI" id="CHEBI:17120"/>
        <dbReference type="ChEBI" id="CHEBI:57287"/>
        <dbReference type="ChEBI" id="CHEBI:62620"/>
    </reaction>
    <physiologicalReaction direction="left-to-right" evidence="6">
        <dbReference type="Rhea" id="RHEA:40116"/>
    </physiologicalReaction>
</comment>
<comment type="catalytic activity">
    <reaction evidence="4">
        <text>octanoyl-CoA + H2O = octanoate + CoA + H(+)</text>
        <dbReference type="Rhea" id="RHEA:30143"/>
        <dbReference type="ChEBI" id="CHEBI:15377"/>
        <dbReference type="ChEBI" id="CHEBI:15378"/>
        <dbReference type="ChEBI" id="CHEBI:25646"/>
        <dbReference type="ChEBI" id="CHEBI:57287"/>
        <dbReference type="ChEBI" id="CHEBI:57386"/>
    </reaction>
    <physiologicalReaction direction="left-to-right" evidence="6">
        <dbReference type="Rhea" id="RHEA:30144"/>
    </physiologicalReaction>
</comment>
<comment type="catalytic activity">
    <reaction evidence="4">
        <text>decanoyl-CoA + H2O = decanoate + CoA + H(+)</text>
        <dbReference type="Rhea" id="RHEA:40059"/>
        <dbReference type="ChEBI" id="CHEBI:15377"/>
        <dbReference type="ChEBI" id="CHEBI:15378"/>
        <dbReference type="ChEBI" id="CHEBI:27689"/>
        <dbReference type="ChEBI" id="CHEBI:57287"/>
        <dbReference type="ChEBI" id="CHEBI:61430"/>
    </reaction>
    <physiologicalReaction direction="left-to-right" evidence="6">
        <dbReference type="Rhea" id="RHEA:40060"/>
    </physiologicalReaction>
</comment>
<comment type="catalytic activity">
    <reaction evidence="4">
        <text>dodecanoyl-CoA + H2O = dodecanoate + CoA + H(+)</text>
        <dbReference type="Rhea" id="RHEA:30135"/>
        <dbReference type="ChEBI" id="CHEBI:15377"/>
        <dbReference type="ChEBI" id="CHEBI:15378"/>
        <dbReference type="ChEBI" id="CHEBI:18262"/>
        <dbReference type="ChEBI" id="CHEBI:57287"/>
        <dbReference type="ChEBI" id="CHEBI:57375"/>
    </reaction>
    <physiologicalReaction direction="left-to-right" evidence="6">
        <dbReference type="Rhea" id="RHEA:30136"/>
    </physiologicalReaction>
</comment>
<comment type="catalytic activity">
    <reaction evidence="4">
        <text>tetradecanoyl-CoA + H2O = tetradecanoate + CoA + H(+)</text>
        <dbReference type="Rhea" id="RHEA:40119"/>
        <dbReference type="ChEBI" id="CHEBI:15377"/>
        <dbReference type="ChEBI" id="CHEBI:15378"/>
        <dbReference type="ChEBI" id="CHEBI:30807"/>
        <dbReference type="ChEBI" id="CHEBI:57287"/>
        <dbReference type="ChEBI" id="CHEBI:57385"/>
    </reaction>
    <physiologicalReaction direction="left-to-right" evidence="6">
        <dbReference type="Rhea" id="RHEA:40120"/>
    </physiologicalReaction>
</comment>
<comment type="catalytic activity">
    <reaction evidence="1">
        <text>hexadecanoyl-CoA + H2O = hexadecanoate + CoA + H(+)</text>
        <dbReference type="Rhea" id="RHEA:16645"/>
        <dbReference type="ChEBI" id="CHEBI:7896"/>
        <dbReference type="ChEBI" id="CHEBI:15377"/>
        <dbReference type="ChEBI" id="CHEBI:15378"/>
        <dbReference type="ChEBI" id="CHEBI:57287"/>
        <dbReference type="ChEBI" id="CHEBI:57379"/>
        <dbReference type="EC" id="3.1.2.2"/>
    </reaction>
    <physiologicalReaction direction="left-to-right" evidence="1">
        <dbReference type="Rhea" id="RHEA:16646"/>
    </physiologicalReaction>
</comment>
<comment type="biophysicochemical properties">
    <kinetics>
        <KM evidence="4">9.2 uM for acetoacetyl-CoA</KM>
        <KM evidence="4">250 uM for acetyl-CoA</KM>
        <KM evidence="4">35 uM for octanoyl-CoA</KM>
        <text evidence="4">kcat is 14.8 sec(-1) for the degradation of acetoacetyl-CoA (3-oxoacyl-CoA thiolase) (PubMed:25478839). kcat is 1.4 sec(-1) for the synthesis of acetoacetyl-CoA (PubMed:25478839). kcat is 0.02 sec(-1) for octanoyl-CoA hydrolysis (PubMed:25478839).</text>
    </kinetics>
</comment>
<comment type="pathway">
    <text evidence="4">Lipid metabolism; fatty acid beta-oxidation.</text>
</comment>
<comment type="subunit">
    <text evidence="3 4">Homotetramer (PubMed:25478839). Interacts with BNIP3.</text>
</comment>
<comment type="subcellular location">
    <subcellularLocation>
        <location evidence="3">Mitochondrion</location>
    </subcellularLocation>
</comment>
<comment type="similarity">
    <text evidence="5">Belongs to the thiolase-like superfamily. Thiolase family.</text>
</comment>
<gene>
    <name type="primary">ACAA2</name>
</gene>
<protein>
    <recommendedName>
        <fullName evidence="5">3-ketoacyl-CoA thiolase, mitochondrial</fullName>
        <ecNumber evidence="4">2.3.1.16</ecNumber>
    </recommendedName>
    <alternativeName>
        <fullName evidence="5">Acetyl-CoA acetyltransferase</fullName>
        <ecNumber evidence="4">2.3.1.9</ecNumber>
    </alternativeName>
    <alternativeName>
        <fullName>Acetyl-CoA acyltransferase</fullName>
    </alternativeName>
    <alternativeName>
        <fullName evidence="5">Acyl-CoA hydrolase, mitochondrial</fullName>
        <ecNumber evidence="4">3.1.2.-</ecNumber>
        <ecNumber evidence="4">3.1.2.1</ecNumber>
        <ecNumber evidence="1">3.1.2.2</ecNumber>
    </alternativeName>
    <alternativeName>
        <fullName>Beta-ketothiolase</fullName>
    </alternativeName>
    <alternativeName>
        <fullName>Mitochondrial 3-oxoacyl-CoA thiolase</fullName>
    </alternativeName>
    <alternativeName>
        <fullName>T1</fullName>
    </alternativeName>
</protein>
<feature type="chain" id="PRO_0000223299" description="3-ketoacyl-CoA thiolase, mitochondrial">
    <location>
        <begin position="1"/>
        <end position="397"/>
    </location>
</feature>
<feature type="transit peptide" description="Mitochondrion; not cleaved">
    <location>
        <begin position="1"/>
        <end position="16"/>
    </location>
</feature>
<feature type="active site" description="Acyl-thioester intermediate" evidence="6">
    <location>
        <position position="92"/>
    </location>
</feature>
<feature type="active site" description="Proton donor/acceptor" evidence="6">
    <location>
        <position position="382"/>
    </location>
</feature>
<feature type="binding site" evidence="4 7">
    <location>
        <position position="224"/>
    </location>
    <ligand>
        <name>CoA</name>
        <dbReference type="ChEBI" id="CHEBI:57287"/>
    </ligand>
</feature>
<feature type="binding site" evidence="4 7">
    <location>
        <position position="227"/>
    </location>
    <ligand>
        <name>CoA</name>
        <dbReference type="ChEBI" id="CHEBI:57287"/>
    </ligand>
</feature>
<feature type="binding site" evidence="4 7">
    <location>
        <position position="251"/>
    </location>
    <ligand>
        <name>CoA</name>
        <dbReference type="ChEBI" id="CHEBI:57287"/>
    </ligand>
</feature>
<feature type="site" description="Increases nucleophilicity of active site Cys" evidence="6">
    <location>
        <position position="352"/>
    </location>
</feature>
<feature type="modified residue" description="N6-acetyllysine; alternate" evidence="2">
    <location>
        <position position="25"/>
    </location>
</feature>
<feature type="modified residue" description="N6-succinyllysine; alternate" evidence="2">
    <location>
        <position position="25"/>
    </location>
</feature>
<feature type="modified residue" description="N6-succinyllysine" evidence="2">
    <location>
        <position position="45"/>
    </location>
</feature>
<feature type="modified residue" description="Phosphothreonine" evidence="8">
    <location>
        <position position="119"/>
    </location>
</feature>
<feature type="modified residue" description="Phosphoserine" evidence="8">
    <location>
        <position position="121"/>
    </location>
</feature>
<feature type="modified residue" description="Phosphotyrosine" evidence="8">
    <location>
        <position position="127"/>
    </location>
</feature>
<feature type="modified residue" description="Phosphothreonine" evidence="2">
    <location>
        <position position="136"/>
    </location>
</feature>
<feature type="modified residue" description="N6-acetyllysine; alternate" evidence="2">
    <location>
        <position position="137"/>
    </location>
</feature>
<feature type="modified residue" description="N6-succinyllysine; alternate" evidence="2">
    <location>
        <position position="137"/>
    </location>
</feature>
<feature type="modified residue" description="Phosphoserine" evidence="9">
    <location>
        <position position="140"/>
    </location>
</feature>
<feature type="modified residue" description="N6-acetyllysine; alternate" evidence="2">
    <location>
        <position position="143"/>
    </location>
</feature>
<feature type="modified residue" description="N6-succinyllysine; alternate" evidence="2">
    <location>
        <position position="143"/>
    </location>
</feature>
<feature type="modified residue" description="N6-acetyllysine; alternate" evidence="2">
    <location>
        <position position="171"/>
    </location>
</feature>
<feature type="modified residue" description="N6-succinyllysine; alternate" evidence="2">
    <location>
        <position position="171"/>
    </location>
</feature>
<feature type="modified residue" description="N6-acetyllysine; alternate" evidence="2">
    <location>
        <position position="191"/>
    </location>
</feature>
<feature type="modified residue" description="N6-succinyllysine; alternate" evidence="2">
    <location>
        <position position="191"/>
    </location>
</feature>
<feature type="modified residue" description="N6-acetyllysine; alternate" evidence="2">
    <location>
        <position position="209"/>
    </location>
</feature>
<feature type="modified residue" description="N6-succinyllysine; alternate" evidence="2">
    <location>
        <position position="209"/>
    </location>
</feature>
<feature type="modified residue" description="N6-succinyllysine" evidence="2">
    <location>
        <position position="211"/>
    </location>
</feature>
<feature type="modified residue" description="N6-succinyllysine" evidence="2">
    <location>
        <position position="212"/>
    </location>
</feature>
<feature type="modified residue" description="N6-succinyllysine" evidence="2">
    <location>
        <position position="214"/>
    </location>
</feature>
<feature type="modified residue" description="N6-acetyllysine; alternate" evidence="2">
    <location>
        <position position="234"/>
    </location>
</feature>
<feature type="modified residue" description="N6-succinyllysine; alternate" evidence="2">
    <location>
        <position position="234"/>
    </location>
</feature>
<feature type="modified residue" description="N6-succinyllysine" evidence="2">
    <location>
        <position position="240"/>
    </location>
</feature>
<feature type="modified residue" description="N6-acetyllysine" evidence="2">
    <location>
        <position position="241"/>
    </location>
</feature>
<feature type="modified residue" description="N6-acetyllysine" evidence="2">
    <location>
        <position position="269"/>
    </location>
</feature>
<feature type="modified residue" description="N6-acetyllysine" evidence="2">
    <location>
        <position position="270"/>
    </location>
</feature>
<feature type="modified residue" description="N6-acetyllysine; alternate" evidence="2">
    <location>
        <position position="305"/>
    </location>
</feature>
<feature type="modified residue" description="N6-succinyllysine; alternate" evidence="2">
    <location>
        <position position="305"/>
    </location>
</feature>
<feature type="modified residue" description="Phosphoserine" evidence="2">
    <location>
        <position position="310"/>
    </location>
</feature>
<feature type="modified residue" description="N6-acetyllysine; alternate" evidence="2">
    <location>
        <position position="312"/>
    </location>
</feature>
<feature type="modified residue" description="N6-succinyllysine; alternate" evidence="2">
    <location>
        <position position="312"/>
    </location>
</feature>
<feature type="modified residue" description="Phosphoserine" evidence="9">
    <location>
        <position position="333"/>
    </location>
</feature>
<feature type="modified residue" description="N6-acetyllysine" evidence="2">
    <location>
        <position position="340"/>
    </location>
</feature>
<feature type="modified residue" description="N6-acetyllysine" evidence="2">
    <location>
        <position position="375"/>
    </location>
</feature>
<feature type="sequence variant" id="VAR_052577" description="In dbSNP:rs11549285.">
    <original>M</original>
    <variation>V</variation>
    <location>
        <position position="217"/>
    </location>
</feature>
<feature type="mutagenesis site" description="Decreased acyl-CoA hydrolase activity." evidence="4">
    <original>C</original>
    <variation>A</variation>
    <location>
        <position position="92"/>
    </location>
</feature>
<feature type="mutagenesis site" description="Decreased acyl-CoA hydrolase activity; when associated with A-382." evidence="4">
    <original>C</original>
    <variation>S</variation>
    <location>
        <position position="92"/>
    </location>
</feature>
<feature type="mutagenesis site" description="Decreased acyl-CoA hydrolase activity; when associated with S-92." evidence="4">
    <original>C</original>
    <variation>S</variation>
    <location>
        <position position="382"/>
    </location>
</feature>
<feature type="sequence conflict" description="In Ref. 1; BAA03800." evidence="5" ref="1">
    <original>A</original>
    <variation>R</variation>
    <location>
        <position position="2"/>
    </location>
</feature>
<feature type="sequence conflict" description="In Ref. 1; BAA03800." evidence="5" ref="1">
    <original>A</original>
    <variation>T</variation>
    <location>
        <position position="169"/>
    </location>
</feature>
<feature type="strand" evidence="10">
    <location>
        <begin position="7"/>
        <end position="14"/>
    </location>
</feature>
<feature type="turn" evidence="10">
    <location>
        <begin position="23"/>
        <end position="26"/>
    </location>
</feature>
<feature type="helix" evidence="10">
    <location>
        <begin position="29"/>
        <end position="43"/>
    </location>
</feature>
<feature type="helix" evidence="10">
    <location>
        <begin position="48"/>
        <end position="50"/>
    </location>
</feature>
<feature type="strand" evidence="10">
    <location>
        <begin position="53"/>
        <end position="57"/>
    </location>
</feature>
<feature type="helix" evidence="10">
    <location>
        <begin position="66"/>
        <end position="68"/>
    </location>
</feature>
<feature type="helix" evidence="10">
    <location>
        <begin position="69"/>
        <end position="76"/>
    </location>
</feature>
<feature type="strand" evidence="10">
    <location>
        <begin position="85"/>
        <end position="89"/>
    </location>
</feature>
<feature type="helix" evidence="10">
    <location>
        <begin position="91"/>
        <end position="93"/>
    </location>
</feature>
<feature type="helix" evidence="10">
    <location>
        <begin position="94"/>
        <end position="107"/>
    </location>
</feature>
<feature type="strand" evidence="10">
    <location>
        <begin position="112"/>
        <end position="122"/>
    </location>
</feature>
<feature type="strand" evidence="10">
    <location>
        <begin position="127"/>
        <end position="129"/>
    </location>
</feature>
<feature type="strand" evidence="10">
    <location>
        <begin position="142"/>
        <end position="146"/>
    </location>
</feature>
<feature type="helix" evidence="10">
    <location>
        <begin position="147"/>
        <end position="151"/>
    </location>
</feature>
<feature type="turn" evidence="10">
    <location>
        <begin position="155"/>
        <end position="158"/>
    </location>
</feature>
<feature type="helix" evidence="10">
    <location>
        <begin position="161"/>
        <end position="172"/>
    </location>
</feature>
<feature type="helix" evidence="10">
    <location>
        <begin position="176"/>
        <end position="196"/>
    </location>
</feature>
<feature type="turn" evidence="10">
    <location>
        <begin position="197"/>
        <end position="202"/>
    </location>
</feature>
<feature type="strand" evidence="10">
    <location>
        <begin position="206"/>
        <end position="208"/>
    </location>
</feature>
<feature type="strand" evidence="10">
    <location>
        <begin position="215"/>
        <end position="217"/>
    </location>
</feature>
<feature type="helix" evidence="10">
    <location>
        <begin position="229"/>
        <end position="234"/>
    </location>
</feature>
<feature type="strand" evidence="10">
    <location>
        <begin position="238"/>
        <end position="240"/>
    </location>
</feature>
<feature type="turn" evidence="10">
    <location>
        <begin position="247"/>
        <end position="249"/>
    </location>
</feature>
<feature type="strand" evidence="10">
    <location>
        <begin position="254"/>
        <end position="264"/>
    </location>
</feature>
<feature type="helix" evidence="10">
    <location>
        <begin position="265"/>
        <end position="271"/>
    </location>
</feature>
<feature type="strand" evidence="10">
    <location>
        <begin position="277"/>
        <end position="286"/>
    </location>
</feature>
<feature type="helix" evidence="10">
    <location>
        <begin position="289"/>
        <end position="294"/>
    </location>
</feature>
<feature type="helix" evidence="10">
    <location>
        <begin position="296"/>
        <end position="307"/>
    </location>
</feature>
<feature type="helix" evidence="10">
    <location>
        <begin position="311"/>
        <end position="313"/>
    </location>
</feature>
<feature type="strand" evidence="10">
    <location>
        <begin position="315"/>
        <end position="319"/>
    </location>
</feature>
<feature type="helix" evidence="10">
    <location>
        <begin position="324"/>
        <end position="334"/>
    </location>
</feature>
<feature type="strand" evidence="10">
    <location>
        <begin position="340"/>
        <end position="342"/>
    </location>
</feature>
<feature type="helix" evidence="10">
    <location>
        <begin position="347"/>
        <end position="350"/>
    </location>
</feature>
<feature type="turn" evidence="10">
    <location>
        <begin position="354"/>
        <end position="356"/>
    </location>
</feature>
<feature type="helix" evidence="10">
    <location>
        <begin position="357"/>
        <end position="372"/>
    </location>
</feature>
<feature type="strand" evidence="10">
    <location>
        <begin position="375"/>
        <end position="383"/>
    </location>
</feature>
<feature type="turn" evidence="10">
    <location>
        <begin position="384"/>
        <end position="386"/>
    </location>
</feature>
<feature type="strand" evidence="10">
    <location>
        <begin position="387"/>
        <end position="395"/>
    </location>
</feature>